<sequence>MARHLFTSESVTEGHPDKICDQISDSILDALLEKDPQSRVACETTVTTGLVLVAGEISTSAYVDIPKLVRETVREIGYTRAKYGFDCDTCAVITSIDEQSGDIAMGVDEGLESKTGEEIEEEIEKVGAGDQGIMFGFACNETPELMPLPISLAHKLSRRLTEVRKTGLVDYLRPDGKTQVTVEYEGSKAVRVHTVLISAQHCETVSNDKIREDLINHVIKEVIPAELLDEETKIYINPTGRFVIGGPQGDTGLTGRKIIIDTYGGYSRHGGGAFSGKDPTKVDRSAAYAARYVAKNIVAAGLADKCEIELAYAIGIARPLSIFIDTFGTGKVSEEKLVELVNKHFDLRPGAIIRDLDLRKPLYKKVAAYGHFGRTDIDLPWERTDKVEQLRKDALGE</sequence>
<name>METK_CLOD6</name>
<reference key="1">
    <citation type="journal article" date="2006" name="Nat. Genet.">
        <title>The multidrug-resistant human pathogen Clostridium difficile has a highly mobile, mosaic genome.</title>
        <authorList>
            <person name="Sebaihia M."/>
            <person name="Wren B.W."/>
            <person name="Mullany P."/>
            <person name="Fairweather N.F."/>
            <person name="Minton N."/>
            <person name="Stabler R."/>
            <person name="Thomson N.R."/>
            <person name="Roberts A.P."/>
            <person name="Cerdeno-Tarraga A.M."/>
            <person name="Wang H."/>
            <person name="Holden M.T.G."/>
            <person name="Wright A."/>
            <person name="Churcher C."/>
            <person name="Quail M.A."/>
            <person name="Baker S."/>
            <person name="Bason N."/>
            <person name="Brooks K."/>
            <person name="Chillingworth T."/>
            <person name="Cronin A."/>
            <person name="Davis P."/>
            <person name="Dowd L."/>
            <person name="Fraser A."/>
            <person name="Feltwell T."/>
            <person name="Hance Z."/>
            <person name="Holroyd S."/>
            <person name="Jagels K."/>
            <person name="Moule S."/>
            <person name="Mungall K."/>
            <person name="Price C."/>
            <person name="Rabbinowitsch E."/>
            <person name="Sharp S."/>
            <person name="Simmonds M."/>
            <person name="Stevens K."/>
            <person name="Unwin L."/>
            <person name="Whithead S."/>
            <person name="Dupuy B."/>
            <person name="Dougan G."/>
            <person name="Barrell B."/>
            <person name="Parkhill J."/>
        </authorList>
    </citation>
    <scope>NUCLEOTIDE SEQUENCE [LARGE SCALE GENOMIC DNA]</scope>
    <source>
        <strain>630</strain>
    </source>
</reference>
<gene>
    <name evidence="1" type="primary">metK</name>
    <name type="ordered locus">CD630_01300</name>
</gene>
<protein>
    <recommendedName>
        <fullName evidence="1">S-adenosylmethionine synthase</fullName>
        <shortName evidence="1">AdoMet synthase</shortName>
        <ecNumber evidence="1">2.5.1.6</ecNumber>
    </recommendedName>
    <alternativeName>
        <fullName evidence="1">MAT</fullName>
    </alternativeName>
    <alternativeName>
        <fullName evidence="1">Methionine adenosyltransferase</fullName>
    </alternativeName>
</protein>
<organism>
    <name type="scientific">Clostridioides difficile (strain 630)</name>
    <name type="common">Peptoclostridium difficile</name>
    <dbReference type="NCBI Taxonomy" id="272563"/>
    <lineage>
        <taxon>Bacteria</taxon>
        <taxon>Bacillati</taxon>
        <taxon>Bacillota</taxon>
        <taxon>Clostridia</taxon>
        <taxon>Peptostreptococcales</taxon>
        <taxon>Peptostreptococcaceae</taxon>
        <taxon>Clostridioides</taxon>
    </lineage>
</organism>
<accession>Q18CL7</accession>
<feature type="chain" id="PRO_1000007938" description="S-adenosylmethionine synthase">
    <location>
        <begin position="1"/>
        <end position="397"/>
    </location>
</feature>
<feature type="region of interest" description="Flexible loop" evidence="1">
    <location>
        <begin position="99"/>
        <end position="109"/>
    </location>
</feature>
<feature type="binding site" description="in other chain" evidence="1">
    <location>
        <position position="15"/>
    </location>
    <ligand>
        <name>ATP</name>
        <dbReference type="ChEBI" id="CHEBI:30616"/>
        <note>ligand shared between two neighboring subunits</note>
    </ligand>
</feature>
<feature type="binding site" evidence="1">
    <location>
        <position position="17"/>
    </location>
    <ligand>
        <name>Mg(2+)</name>
        <dbReference type="ChEBI" id="CHEBI:18420"/>
    </ligand>
</feature>
<feature type="binding site" evidence="1">
    <location>
        <position position="43"/>
    </location>
    <ligand>
        <name>K(+)</name>
        <dbReference type="ChEBI" id="CHEBI:29103"/>
    </ligand>
</feature>
<feature type="binding site" description="in other chain" evidence="1">
    <location>
        <position position="56"/>
    </location>
    <ligand>
        <name>L-methionine</name>
        <dbReference type="ChEBI" id="CHEBI:57844"/>
        <note>ligand shared between two neighboring subunits</note>
    </ligand>
</feature>
<feature type="binding site" description="in other chain" evidence="1">
    <location>
        <position position="99"/>
    </location>
    <ligand>
        <name>L-methionine</name>
        <dbReference type="ChEBI" id="CHEBI:57844"/>
        <note>ligand shared between two neighboring subunits</note>
    </ligand>
</feature>
<feature type="binding site" description="in other chain" evidence="1">
    <location>
        <begin position="175"/>
        <end position="177"/>
    </location>
    <ligand>
        <name>ATP</name>
        <dbReference type="ChEBI" id="CHEBI:30616"/>
        <note>ligand shared between two neighboring subunits</note>
    </ligand>
</feature>
<feature type="binding site" description="in other chain" evidence="1">
    <location>
        <begin position="241"/>
        <end position="242"/>
    </location>
    <ligand>
        <name>ATP</name>
        <dbReference type="ChEBI" id="CHEBI:30616"/>
        <note>ligand shared between two neighboring subunits</note>
    </ligand>
</feature>
<feature type="binding site" evidence="1">
    <location>
        <position position="250"/>
    </location>
    <ligand>
        <name>ATP</name>
        <dbReference type="ChEBI" id="CHEBI:30616"/>
        <note>ligand shared between two neighboring subunits</note>
    </ligand>
</feature>
<feature type="binding site" evidence="1">
    <location>
        <position position="250"/>
    </location>
    <ligand>
        <name>L-methionine</name>
        <dbReference type="ChEBI" id="CHEBI:57844"/>
        <note>ligand shared between two neighboring subunits</note>
    </ligand>
</feature>
<feature type="binding site" description="in other chain" evidence="1">
    <location>
        <begin position="256"/>
        <end position="257"/>
    </location>
    <ligand>
        <name>ATP</name>
        <dbReference type="ChEBI" id="CHEBI:30616"/>
        <note>ligand shared between two neighboring subunits</note>
    </ligand>
</feature>
<feature type="binding site" evidence="1">
    <location>
        <position position="273"/>
    </location>
    <ligand>
        <name>ATP</name>
        <dbReference type="ChEBI" id="CHEBI:30616"/>
        <note>ligand shared between two neighboring subunits</note>
    </ligand>
</feature>
<feature type="binding site" evidence="1">
    <location>
        <position position="277"/>
    </location>
    <ligand>
        <name>ATP</name>
        <dbReference type="ChEBI" id="CHEBI:30616"/>
        <note>ligand shared between two neighboring subunits</note>
    </ligand>
</feature>
<feature type="binding site" description="in other chain" evidence="1">
    <location>
        <position position="281"/>
    </location>
    <ligand>
        <name>L-methionine</name>
        <dbReference type="ChEBI" id="CHEBI:57844"/>
        <note>ligand shared between two neighboring subunits</note>
    </ligand>
</feature>
<proteinExistence type="inferred from homology"/>
<keyword id="KW-0067">ATP-binding</keyword>
<keyword id="KW-0963">Cytoplasm</keyword>
<keyword id="KW-0460">Magnesium</keyword>
<keyword id="KW-0479">Metal-binding</keyword>
<keyword id="KW-0547">Nucleotide-binding</keyword>
<keyword id="KW-0554">One-carbon metabolism</keyword>
<keyword id="KW-0630">Potassium</keyword>
<keyword id="KW-1185">Reference proteome</keyword>
<keyword id="KW-0808">Transferase</keyword>
<comment type="function">
    <text evidence="1">Catalyzes the formation of S-adenosylmethionine (AdoMet) from methionine and ATP. The overall synthetic reaction is composed of two sequential steps, AdoMet formation and the subsequent tripolyphosphate hydrolysis which occurs prior to release of AdoMet from the enzyme.</text>
</comment>
<comment type="catalytic activity">
    <reaction evidence="1">
        <text>L-methionine + ATP + H2O = S-adenosyl-L-methionine + phosphate + diphosphate</text>
        <dbReference type="Rhea" id="RHEA:21080"/>
        <dbReference type="ChEBI" id="CHEBI:15377"/>
        <dbReference type="ChEBI" id="CHEBI:30616"/>
        <dbReference type="ChEBI" id="CHEBI:33019"/>
        <dbReference type="ChEBI" id="CHEBI:43474"/>
        <dbReference type="ChEBI" id="CHEBI:57844"/>
        <dbReference type="ChEBI" id="CHEBI:59789"/>
        <dbReference type="EC" id="2.5.1.6"/>
    </reaction>
</comment>
<comment type="cofactor">
    <cofactor evidence="1">
        <name>Mg(2+)</name>
        <dbReference type="ChEBI" id="CHEBI:18420"/>
    </cofactor>
    <text evidence="1">Binds 2 divalent ions per subunit.</text>
</comment>
<comment type="cofactor">
    <cofactor evidence="1">
        <name>K(+)</name>
        <dbReference type="ChEBI" id="CHEBI:29103"/>
    </cofactor>
    <text evidence="1">Binds 1 potassium ion per subunit.</text>
</comment>
<comment type="pathway">
    <text evidence="1">Amino-acid biosynthesis; S-adenosyl-L-methionine biosynthesis; S-adenosyl-L-methionine from L-methionine: step 1/1.</text>
</comment>
<comment type="subunit">
    <text evidence="1">Homotetramer; dimer of dimers.</text>
</comment>
<comment type="subcellular location">
    <subcellularLocation>
        <location evidence="1">Cytoplasm</location>
    </subcellularLocation>
</comment>
<comment type="similarity">
    <text evidence="1">Belongs to the AdoMet synthase family.</text>
</comment>
<evidence type="ECO:0000255" key="1">
    <source>
        <dbReference type="HAMAP-Rule" id="MF_00086"/>
    </source>
</evidence>
<dbReference type="EC" id="2.5.1.6" evidence="1"/>
<dbReference type="EMBL" id="AM180355">
    <property type="protein sequence ID" value="CAJ66950.1"/>
    <property type="molecule type" value="Genomic_DNA"/>
</dbReference>
<dbReference type="RefSeq" id="WP_003432462.1">
    <property type="nucleotide sequence ID" value="NZ_JAUPES010000004.1"/>
</dbReference>
<dbReference type="RefSeq" id="YP_001086599.1">
    <property type="nucleotide sequence ID" value="NC_009089.1"/>
</dbReference>
<dbReference type="SMR" id="Q18CL7"/>
<dbReference type="STRING" id="272563.CD630_01300"/>
<dbReference type="EnsemblBacteria" id="CAJ66950">
    <property type="protein sequence ID" value="CAJ66950"/>
    <property type="gene ID" value="CD630_01300"/>
</dbReference>
<dbReference type="GeneID" id="66352677"/>
<dbReference type="KEGG" id="cdf:CD630_01300"/>
<dbReference type="KEGG" id="pdc:CDIF630_00247"/>
<dbReference type="PATRIC" id="fig|272563.120.peg.142"/>
<dbReference type="eggNOG" id="COG0192">
    <property type="taxonomic scope" value="Bacteria"/>
</dbReference>
<dbReference type="OrthoDB" id="9801686at2"/>
<dbReference type="PhylomeDB" id="Q18CL7"/>
<dbReference type="BioCyc" id="PDIF272563:G12WB-234-MONOMER"/>
<dbReference type="UniPathway" id="UPA00315">
    <property type="reaction ID" value="UER00080"/>
</dbReference>
<dbReference type="Proteomes" id="UP000001978">
    <property type="component" value="Chromosome"/>
</dbReference>
<dbReference type="GO" id="GO:0005737">
    <property type="term" value="C:cytoplasm"/>
    <property type="evidence" value="ECO:0007669"/>
    <property type="project" value="UniProtKB-SubCell"/>
</dbReference>
<dbReference type="GO" id="GO:0005524">
    <property type="term" value="F:ATP binding"/>
    <property type="evidence" value="ECO:0007669"/>
    <property type="project" value="UniProtKB-UniRule"/>
</dbReference>
<dbReference type="GO" id="GO:0000287">
    <property type="term" value="F:magnesium ion binding"/>
    <property type="evidence" value="ECO:0007669"/>
    <property type="project" value="UniProtKB-UniRule"/>
</dbReference>
<dbReference type="GO" id="GO:0004478">
    <property type="term" value="F:methionine adenosyltransferase activity"/>
    <property type="evidence" value="ECO:0007669"/>
    <property type="project" value="UniProtKB-UniRule"/>
</dbReference>
<dbReference type="GO" id="GO:0006730">
    <property type="term" value="P:one-carbon metabolic process"/>
    <property type="evidence" value="ECO:0007669"/>
    <property type="project" value="UniProtKB-KW"/>
</dbReference>
<dbReference type="GO" id="GO:0006556">
    <property type="term" value="P:S-adenosylmethionine biosynthetic process"/>
    <property type="evidence" value="ECO:0007669"/>
    <property type="project" value="UniProtKB-UniRule"/>
</dbReference>
<dbReference type="CDD" id="cd18079">
    <property type="entry name" value="S-AdoMet_synt"/>
    <property type="match status" value="1"/>
</dbReference>
<dbReference type="FunFam" id="3.30.300.10:FF:000003">
    <property type="entry name" value="S-adenosylmethionine synthase"/>
    <property type="match status" value="1"/>
</dbReference>
<dbReference type="FunFam" id="3.30.300.10:FF:000004">
    <property type="entry name" value="S-adenosylmethionine synthase"/>
    <property type="match status" value="1"/>
</dbReference>
<dbReference type="Gene3D" id="3.30.300.10">
    <property type="match status" value="3"/>
</dbReference>
<dbReference type="HAMAP" id="MF_00086">
    <property type="entry name" value="S_AdoMet_synth1"/>
    <property type="match status" value="1"/>
</dbReference>
<dbReference type="InterPro" id="IPR022631">
    <property type="entry name" value="ADOMET_SYNTHASE_CS"/>
</dbReference>
<dbReference type="InterPro" id="IPR022630">
    <property type="entry name" value="S-AdoMet_synt_C"/>
</dbReference>
<dbReference type="InterPro" id="IPR022629">
    <property type="entry name" value="S-AdoMet_synt_central"/>
</dbReference>
<dbReference type="InterPro" id="IPR022628">
    <property type="entry name" value="S-AdoMet_synt_N"/>
</dbReference>
<dbReference type="InterPro" id="IPR002133">
    <property type="entry name" value="S-AdoMet_synthetase"/>
</dbReference>
<dbReference type="InterPro" id="IPR022636">
    <property type="entry name" value="S-AdoMet_synthetase_sfam"/>
</dbReference>
<dbReference type="NCBIfam" id="TIGR01034">
    <property type="entry name" value="metK"/>
    <property type="match status" value="1"/>
</dbReference>
<dbReference type="PANTHER" id="PTHR11964">
    <property type="entry name" value="S-ADENOSYLMETHIONINE SYNTHETASE"/>
    <property type="match status" value="1"/>
</dbReference>
<dbReference type="Pfam" id="PF02773">
    <property type="entry name" value="S-AdoMet_synt_C"/>
    <property type="match status" value="1"/>
</dbReference>
<dbReference type="Pfam" id="PF02772">
    <property type="entry name" value="S-AdoMet_synt_M"/>
    <property type="match status" value="1"/>
</dbReference>
<dbReference type="Pfam" id="PF00438">
    <property type="entry name" value="S-AdoMet_synt_N"/>
    <property type="match status" value="1"/>
</dbReference>
<dbReference type="PIRSF" id="PIRSF000497">
    <property type="entry name" value="MAT"/>
    <property type="match status" value="1"/>
</dbReference>
<dbReference type="SUPFAM" id="SSF55973">
    <property type="entry name" value="S-adenosylmethionine synthetase"/>
    <property type="match status" value="3"/>
</dbReference>
<dbReference type="PROSITE" id="PS00376">
    <property type="entry name" value="ADOMET_SYNTHASE_1"/>
    <property type="match status" value="1"/>
</dbReference>
<dbReference type="PROSITE" id="PS00377">
    <property type="entry name" value="ADOMET_SYNTHASE_2"/>
    <property type="match status" value="1"/>
</dbReference>